<accession>Q9LRK4</accession>
<accession>F4IYX8</accession>
<organism>
    <name type="scientific">Arabidopsis thaliana</name>
    <name type="common">Mouse-ear cress</name>
    <dbReference type="NCBI Taxonomy" id="3702"/>
    <lineage>
        <taxon>Eukaryota</taxon>
        <taxon>Viridiplantae</taxon>
        <taxon>Streptophyta</taxon>
        <taxon>Embryophyta</taxon>
        <taxon>Tracheophyta</taxon>
        <taxon>Spermatophyta</taxon>
        <taxon>Magnoliopsida</taxon>
        <taxon>eudicotyledons</taxon>
        <taxon>Gunneridae</taxon>
        <taxon>Pentapetalae</taxon>
        <taxon>rosids</taxon>
        <taxon>malvids</taxon>
        <taxon>Brassicales</taxon>
        <taxon>Brassicaceae</taxon>
        <taxon>Camelineae</taxon>
        <taxon>Arabidopsis</taxon>
    </lineage>
</organism>
<keyword id="KW-1185">Reference proteome</keyword>
<keyword id="KW-0677">Repeat</keyword>
<keyword id="KW-0964">Secreted</keyword>
<keyword id="KW-0732">Signal</keyword>
<gene>
    <name type="primary">CRRSP33</name>
    <name type="ordered locus">At3g22030</name>
    <name type="ORF">MZN24.21</name>
</gene>
<comment type="subcellular location">
    <subcellularLocation>
        <location evidence="3">Secreted</location>
    </subcellularLocation>
</comment>
<comment type="similarity">
    <text evidence="3">Belongs to the cysteine-rich repeat secretory protein family.</text>
</comment>
<comment type="caution">
    <text evidence="3">Could be the product of a pseudogene.</text>
</comment>
<comment type="sequence caution" evidence="3">
    <conflict type="erroneous gene model prediction">
        <sequence resource="EMBL-CDS" id="AEE76580"/>
    </conflict>
</comment>
<comment type="sequence caution" evidence="3">
    <conflict type="erroneous gene model prediction">
        <sequence resource="EMBL-CDS" id="BAB01386"/>
    </conflict>
</comment>
<name>CRR33_ARATH</name>
<sequence>MFSSYSLCKCLVSFHILAIQVLISCASSLNLTNEYLNHKCRKYQPGSEYEKELNTLSRRVATLDFTDGFTHRSNSRDTKSVTIIFQCRGDSYRSKCNSCYATALAGFRSRCPRNKGGIIWYDQCFLDVSMINDNSPRRMNYDNIFSMHNPNNVRGNVNSFNKKTTEFLYKLIGKADRLDVDGINFLYYAAGEMRLGKQTLFAMVQCAKDILSCKDCLEWSIKELSKCCDGKQGARVVGTICNLRYELYPFLRT</sequence>
<reference key="1">
    <citation type="journal article" date="2000" name="DNA Res.">
        <title>Structural analysis of Arabidopsis thaliana chromosome 3. I. Sequence features of the regions of 4,504,864 bp covered by sixty P1 and TAC clones.</title>
        <authorList>
            <person name="Sato S."/>
            <person name="Nakamura Y."/>
            <person name="Kaneko T."/>
            <person name="Katoh T."/>
            <person name="Asamizu E."/>
            <person name="Tabata S."/>
        </authorList>
    </citation>
    <scope>NUCLEOTIDE SEQUENCE [LARGE SCALE GENOMIC DNA]</scope>
    <source>
        <strain>cv. Columbia</strain>
    </source>
</reference>
<reference key="2">
    <citation type="journal article" date="2017" name="Plant J.">
        <title>Araport11: a complete reannotation of the Arabidopsis thaliana reference genome.</title>
        <authorList>
            <person name="Cheng C.Y."/>
            <person name="Krishnakumar V."/>
            <person name="Chan A.P."/>
            <person name="Thibaud-Nissen F."/>
            <person name="Schobel S."/>
            <person name="Town C.D."/>
        </authorList>
    </citation>
    <scope>GENOME REANNOTATION</scope>
    <source>
        <strain>cv. Columbia</strain>
    </source>
</reference>
<reference key="3">
    <citation type="journal article" date="2001" name="Plant Physiol.">
        <title>A superfamily of proteins with novel cysteine-rich repeats.</title>
        <authorList>
            <person name="Chen Z."/>
        </authorList>
    </citation>
    <scope>GENE FAMILY ORGANIZATION</scope>
    <scope>NOMENCLATURE</scope>
</reference>
<evidence type="ECO:0000255" key="1"/>
<evidence type="ECO:0000255" key="2">
    <source>
        <dbReference type="PROSITE-ProRule" id="PRU00806"/>
    </source>
</evidence>
<evidence type="ECO:0000305" key="3"/>
<protein>
    <recommendedName>
        <fullName>Putative cysteine-rich repeat secretory protein 33</fullName>
    </recommendedName>
</protein>
<proteinExistence type="uncertain"/>
<dbReference type="EMBL" id="AB028622">
    <property type="protein sequence ID" value="BAB01386.1"/>
    <property type="status" value="ALT_SEQ"/>
    <property type="molecule type" value="Genomic_DNA"/>
</dbReference>
<dbReference type="EMBL" id="CP002686">
    <property type="protein sequence ID" value="AEE76580.1"/>
    <property type="status" value="ALT_SEQ"/>
    <property type="molecule type" value="Genomic_DNA"/>
</dbReference>
<dbReference type="RefSeq" id="NP_188841.1">
    <property type="nucleotide sequence ID" value="NM_113099.1"/>
</dbReference>
<dbReference type="SMR" id="Q9LRK4"/>
<dbReference type="PeptideAtlas" id="Q9LRK4"/>
<dbReference type="ProteomicsDB" id="224507"/>
<dbReference type="GeneID" id="821763"/>
<dbReference type="KEGG" id="ath:AT3G22030"/>
<dbReference type="Araport" id="AT3G22030"/>
<dbReference type="TAIR" id="AT3G22030"/>
<dbReference type="InParanoid" id="Q9LRK4"/>
<dbReference type="OrthoDB" id="1107582at2759"/>
<dbReference type="Proteomes" id="UP000006548">
    <property type="component" value="Chromosome 3"/>
</dbReference>
<dbReference type="ExpressionAtlas" id="Q9LRK4">
    <property type="expression patterns" value="baseline and differential"/>
</dbReference>
<dbReference type="GO" id="GO:0005576">
    <property type="term" value="C:extracellular region"/>
    <property type="evidence" value="ECO:0007669"/>
    <property type="project" value="UniProtKB-SubCell"/>
</dbReference>
<dbReference type="CDD" id="cd23509">
    <property type="entry name" value="Gnk2-like"/>
    <property type="match status" value="2"/>
</dbReference>
<dbReference type="Gene3D" id="3.30.430.20">
    <property type="entry name" value="Gnk2 domain, C-X8-C-X2-C motif"/>
    <property type="match status" value="2"/>
</dbReference>
<dbReference type="InterPro" id="IPR050581">
    <property type="entry name" value="CRR_secretory_protein"/>
</dbReference>
<dbReference type="InterPro" id="IPR002902">
    <property type="entry name" value="GNK2"/>
</dbReference>
<dbReference type="InterPro" id="IPR038408">
    <property type="entry name" value="GNK2_sf"/>
</dbReference>
<dbReference type="PANTHER" id="PTHR32411:SF72">
    <property type="entry name" value="CYSTEINE-RICH REPEAT SECRETORY PROTEIN 34-RELATED"/>
    <property type="match status" value="1"/>
</dbReference>
<dbReference type="PANTHER" id="PTHR32411">
    <property type="entry name" value="CYSTEINE-RICH REPEAT SECRETORY PROTEIN 38-RELATED"/>
    <property type="match status" value="1"/>
</dbReference>
<dbReference type="Pfam" id="PF01657">
    <property type="entry name" value="Stress-antifung"/>
    <property type="match status" value="2"/>
</dbReference>
<dbReference type="PROSITE" id="PS51473">
    <property type="entry name" value="GNK2"/>
    <property type="match status" value="2"/>
</dbReference>
<feature type="signal peptide" evidence="1">
    <location>
        <begin position="1"/>
        <end position="28"/>
    </location>
</feature>
<feature type="chain" id="PRO_0000296161" description="Putative cysteine-rich repeat secretory protein 33">
    <location>
        <begin position="29"/>
        <end position="253"/>
    </location>
</feature>
<feature type="domain" description="Gnk2-homologous 1" evidence="2">
    <location>
        <begin position="34"/>
        <end position="133"/>
    </location>
</feature>
<feature type="domain" description="Gnk2-homologous 2" evidence="2">
    <location>
        <begin position="141"/>
        <end position="250"/>
    </location>
</feature>